<accession>Q9LVK9</accession>
<accession>F4JEL2</accession>
<comment type="function">
    <text evidence="8">Involved in transport of phospholipids and in regulation of pollen plasma membrane lipid asymmetry.</text>
</comment>
<comment type="catalytic activity">
    <reaction evidence="7">
        <text>ATP + H2O + phospholipidSide 1 = ADP + phosphate + phospholipidSide 2.</text>
        <dbReference type="EC" id="7.6.2.1"/>
    </reaction>
</comment>
<comment type="subcellular location">
    <subcellularLocation>
        <location evidence="2">Cell membrane</location>
        <topology evidence="3">Multi-pass membrane protein</topology>
    </subcellularLocation>
    <subcellularLocation>
        <location evidence="2">Endomembrane system</location>
        <topology evidence="3">Multi-pass membrane protein</topology>
    </subcellularLocation>
</comment>
<comment type="disruption phenotype">
    <text evidence="4">Ala6 and ala7 double mutants are hypersensitive to temperature stress and are impaired in pollen fitness with an altered lipid composition and short and slow pollen tubes.</text>
</comment>
<comment type="similarity">
    <text evidence="6">Belongs to the cation transport ATPase (P-type) (TC 3.A.3) family. Type IV subfamily.</text>
</comment>
<comment type="sequence caution" evidence="6">
    <conflict type="erroneous gene model prediction">
        <sequence resource="EMBL-CDS" id="BAB02320"/>
    </conflict>
</comment>
<dbReference type="EC" id="7.6.2.1" evidence="7"/>
<dbReference type="EMBL" id="AB019229">
    <property type="protein sequence ID" value="BAB02320.1"/>
    <property type="status" value="ALT_SEQ"/>
    <property type="molecule type" value="Genomic_DNA"/>
</dbReference>
<dbReference type="EMBL" id="CP002686">
    <property type="protein sequence ID" value="AEE75436.1"/>
    <property type="molecule type" value="Genomic_DNA"/>
</dbReference>
<dbReference type="RefSeq" id="NP_188006.4">
    <property type="nucleotide sequence ID" value="NM_112244.5"/>
</dbReference>
<dbReference type="SMR" id="Q9LVK9"/>
<dbReference type="FunCoup" id="Q9LVK9">
    <property type="interactions" value="623"/>
</dbReference>
<dbReference type="STRING" id="3702.Q9LVK9"/>
<dbReference type="GlyGen" id="Q9LVK9">
    <property type="glycosylation" value="1 site"/>
</dbReference>
<dbReference type="PaxDb" id="3702-AT3G13900.1"/>
<dbReference type="ProteomicsDB" id="245016"/>
<dbReference type="EnsemblPlants" id="AT3G13900.1">
    <property type="protein sequence ID" value="AT3G13900.1"/>
    <property type="gene ID" value="AT3G13900"/>
</dbReference>
<dbReference type="GeneID" id="820603"/>
<dbReference type="Gramene" id="AT3G13900.1">
    <property type="protein sequence ID" value="AT3G13900.1"/>
    <property type="gene ID" value="AT3G13900"/>
</dbReference>
<dbReference type="KEGG" id="ath:AT3G13900"/>
<dbReference type="Araport" id="AT3G13900"/>
<dbReference type="TAIR" id="AT3G13900">
    <property type="gene designation" value="ALA7"/>
</dbReference>
<dbReference type="eggNOG" id="KOG0206">
    <property type="taxonomic scope" value="Eukaryota"/>
</dbReference>
<dbReference type="HOGENOM" id="CLU_000846_3_1_1"/>
<dbReference type="InParanoid" id="Q9LVK9"/>
<dbReference type="OMA" id="HFRIDVQ"/>
<dbReference type="OrthoDB" id="377733at2759"/>
<dbReference type="BioCyc" id="ARA:AT3G13900-MONOMER"/>
<dbReference type="PRO" id="PR:Q9LVK9"/>
<dbReference type="Proteomes" id="UP000006548">
    <property type="component" value="Chromosome 3"/>
</dbReference>
<dbReference type="ExpressionAtlas" id="Q9LVK9">
    <property type="expression patterns" value="baseline and differential"/>
</dbReference>
<dbReference type="GO" id="GO:0012505">
    <property type="term" value="C:endomembrane system"/>
    <property type="evidence" value="ECO:0007669"/>
    <property type="project" value="UniProtKB-SubCell"/>
</dbReference>
<dbReference type="GO" id="GO:0005886">
    <property type="term" value="C:plasma membrane"/>
    <property type="evidence" value="ECO:0007669"/>
    <property type="project" value="UniProtKB-SubCell"/>
</dbReference>
<dbReference type="GO" id="GO:0005524">
    <property type="term" value="F:ATP binding"/>
    <property type="evidence" value="ECO:0007669"/>
    <property type="project" value="UniProtKB-KW"/>
</dbReference>
<dbReference type="GO" id="GO:0016887">
    <property type="term" value="F:ATP hydrolysis activity"/>
    <property type="evidence" value="ECO:0007669"/>
    <property type="project" value="InterPro"/>
</dbReference>
<dbReference type="GO" id="GO:0140326">
    <property type="term" value="F:ATPase-coupled intramembrane lipid transporter activity"/>
    <property type="evidence" value="ECO:0007669"/>
    <property type="project" value="UniProtKB-EC"/>
</dbReference>
<dbReference type="GO" id="GO:0000287">
    <property type="term" value="F:magnesium ion binding"/>
    <property type="evidence" value="ECO:0007669"/>
    <property type="project" value="InterPro"/>
</dbReference>
<dbReference type="GO" id="GO:0015914">
    <property type="term" value="P:phospholipid transport"/>
    <property type="evidence" value="ECO:0007669"/>
    <property type="project" value="InterPro"/>
</dbReference>
<dbReference type="GO" id="GO:0009860">
    <property type="term" value="P:pollen tube growth"/>
    <property type="evidence" value="ECO:0000316"/>
    <property type="project" value="TAIR"/>
</dbReference>
<dbReference type="GO" id="GO:1905038">
    <property type="term" value="P:regulation of membrane lipid metabolic process"/>
    <property type="evidence" value="ECO:0000316"/>
    <property type="project" value="TAIR"/>
</dbReference>
<dbReference type="CDD" id="cd02073">
    <property type="entry name" value="P-type_ATPase_APLT_Dnf-like"/>
    <property type="match status" value="1"/>
</dbReference>
<dbReference type="FunFam" id="2.70.150.10:FF:000023">
    <property type="entry name" value="Phospholipid-transporting ATPase"/>
    <property type="match status" value="1"/>
</dbReference>
<dbReference type="FunFam" id="3.40.1110.10:FF:000050">
    <property type="entry name" value="Phospholipid-transporting ATPase"/>
    <property type="match status" value="1"/>
</dbReference>
<dbReference type="FunFam" id="3.40.50.1000:FF:000014">
    <property type="entry name" value="Phospholipid-transporting ATPase"/>
    <property type="match status" value="1"/>
</dbReference>
<dbReference type="Gene3D" id="3.40.1110.10">
    <property type="entry name" value="Calcium-transporting ATPase, cytoplasmic domain N"/>
    <property type="match status" value="2"/>
</dbReference>
<dbReference type="Gene3D" id="2.70.150.10">
    <property type="entry name" value="Calcium-transporting ATPase, cytoplasmic transduction domain A"/>
    <property type="match status" value="1"/>
</dbReference>
<dbReference type="Gene3D" id="3.40.50.1000">
    <property type="entry name" value="HAD superfamily/HAD-like"/>
    <property type="match status" value="2"/>
</dbReference>
<dbReference type="InterPro" id="IPR023299">
    <property type="entry name" value="ATPase_P-typ_cyto_dom_N"/>
</dbReference>
<dbReference type="InterPro" id="IPR018303">
    <property type="entry name" value="ATPase_P-typ_P_site"/>
</dbReference>
<dbReference type="InterPro" id="IPR023298">
    <property type="entry name" value="ATPase_P-typ_TM_dom_sf"/>
</dbReference>
<dbReference type="InterPro" id="IPR008250">
    <property type="entry name" value="ATPase_P-typ_transduc_dom_A_sf"/>
</dbReference>
<dbReference type="InterPro" id="IPR036412">
    <property type="entry name" value="HAD-like_sf"/>
</dbReference>
<dbReference type="InterPro" id="IPR023214">
    <property type="entry name" value="HAD_sf"/>
</dbReference>
<dbReference type="InterPro" id="IPR006539">
    <property type="entry name" value="P-type_ATPase_IV"/>
</dbReference>
<dbReference type="InterPro" id="IPR032631">
    <property type="entry name" value="P-type_ATPase_N"/>
</dbReference>
<dbReference type="InterPro" id="IPR001757">
    <property type="entry name" value="P_typ_ATPase"/>
</dbReference>
<dbReference type="InterPro" id="IPR032630">
    <property type="entry name" value="P_typ_ATPase_c"/>
</dbReference>
<dbReference type="InterPro" id="IPR044492">
    <property type="entry name" value="P_typ_ATPase_HD_dom"/>
</dbReference>
<dbReference type="NCBIfam" id="TIGR01652">
    <property type="entry name" value="ATPase-Plipid"/>
    <property type="match status" value="1"/>
</dbReference>
<dbReference type="NCBIfam" id="TIGR01494">
    <property type="entry name" value="ATPase_P-type"/>
    <property type="match status" value="2"/>
</dbReference>
<dbReference type="PANTHER" id="PTHR24092:SF173">
    <property type="entry name" value="PHOSPHOLIPID-TRANSPORTING ATPASE 7-RELATED"/>
    <property type="match status" value="1"/>
</dbReference>
<dbReference type="PANTHER" id="PTHR24092">
    <property type="entry name" value="PROBABLE PHOSPHOLIPID-TRANSPORTING ATPASE"/>
    <property type="match status" value="1"/>
</dbReference>
<dbReference type="Pfam" id="PF13246">
    <property type="entry name" value="Cation_ATPase"/>
    <property type="match status" value="1"/>
</dbReference>
<dbReference type="Pfam" id="PF16212">
    <property type="entry name" value="PhoLip_ATPase_C"/>
    <property type="match status" value="1"/>
</dbReference>
<dbReference type="Pfam" id="PF16209">
    <property type="entry name" value="PhoLip_ATPase_N"/>
    <property type="match status" value="1"/>
</dbReference>
<dbReference type="PRINTS" id="PR00119">
    <property type="entry name" value="CATATPASE"/>
</dbReference>
<dbReference type="SFLD" id="SFLDS00003">
    <property type="entry name" value="Haloacid_Dehalogenase"/>
    <property type="match status" value="1"/>
</dbReference>
<dbReference type="SFLD" id="SFLDF00027">
    <property type="entry name" value="p-type_atpase"/>
    <property type="match status" value="1"/>
</dbReference>
<dbReference type="SUPFAM" id="SSF81653">
    <property type="entry name" value="Calcium ATPase, transduction domain A"/>
    <property type="match status" value="1"/>
</dbReference>
<dbReference type="SUPFAM" id="SSF81665">
    <property type="entry name" value="Calcium ATPase, transmembrane domain M"/>
    <property type="match status" value="1"/>
</dbReference>
<dbReference type="SUPFAM" id="SSF56784">
    <property type="entry name" value="HAD-like"/>
    <property type="match status" value="1"/>
</dbReference>
<dbReference type="SUPFAM" id="SSF81660">
    <property type="entry name" value="Metal cation-transporting ATPase, ATP-binding domain N"/>
    <property type="match status" value="1"/>
</dbReference>
<dbReference type="PROSITE" id="PS00154">
    <property type="entry name" value="ATPASE_E1_E2"/>
    <property type="match status" value="1"/>
</dbReference>
<protein>
    <recommendedName>
        <fullName evidence="5">Probable phospholipid-transporting ATPase 7</fullName>
        <shortName evidence="5">AtALA7</shortName>
        <ecNumber evidence="7">7.6.2.1</ecNumber>
    </recommendedName>
    <alternativeName>
        <fullName evidence="5">Aminophospholipid flippase 7</fullName>
    </alternativeName>
</protein>
<proteinExistence type="inferred from homology"/>
<sequence length="1243" mass="140301">MGRRRIRSRIRKSHFYTFKCLRPKTLEDQGPHIINGPGYTRIVHCNQPHLHLAKVLRYTSNYVSTTRYNLITFLPKCLYEQFHRVANFYFLVAAILSVFPLSPFNKWSMIAPLIFVVGLSMGKEALEDWRRFMQDVKVNSRKATVHRGDGDFGRRKWKKLRVGDVVKVEKDQFFPADLLLLSSSYEDGICYVETMNLDGETNLKVKRCLDVTLPLERDDTFQSFSGTIKCEDPNPNLYTFVGNLEYDGQVYPLDPSQILLRDSKLRNTSYVYGVVVFTGHDTKVMQNSTKSPSKRSRIEKRMDYIIYTLFALLVLVSFISSLGFAVMTKMHMGDWWYLRPDKPERLTNPRNPFHAWVVHLITAVLLYGYLIPISLYVSIELVKVLQATFINQDLQMYDSESGTPAQARTSNLNEELGQVDTILSDKTGTLTCNQMDFLKCSIAGTSYGVRASEVELAAAKQMAIDLDEEQGEEVTHLPRTRGRMHGYAKMPSKTSSDIELETVITATDEGDQTQSTGIKGFSFEDQRLMGGNWLNEPNSDDILMFLRILAVCHTAIPEVDEDTGKCTYEAESPDEVAFLVAAGEFGFEFTKRTQSSVFISERHSGQPVEREYKVLNVLDFTSKRKRMSVIVRDEKGQILLLCKGADSIIFERLSKNGKNYLEATSKHLNGYGEAGLRTLALSYRKLDETEYSIWNSEFHKAKTSVGADRDEMLEKVSDMMEKELILVGATAVEDKLQKGVPQCIDKLAQAGLKIWVLTGDKMETAINIGYACSLLRQGMKQIYIALRNEEGSSQDPEAAARENILMQIINASQMIKLEKDPHAAFALIIDGKTLTYALEDDIKYQFLALAVDCASVICCRVSPKQKALVTRLAKEGTGKTTLAIGDGANDVGMIQEADIGVGISGVEGMQAVMASDFSIAQFRFLERLLVVHGHWCYKRIAQMICYFFYKNITFGLTLFYFEAFTGFSGQAIYNDSYLLLFNVILTSLPVIALGVFEQDVSSEVCLQFPALYQQGPKNLFFDWYRIIGWMANGVYASVVIFSLNIGIFHVQSFCSGGQTADMDAMGTAMFTCIIWAVNVQIALTMSHFTWIQHVLIWGSIVTWYIFLALFGMLPPKVSGNIFHMLSETLAPAPIFWLTSLLVIAATTLPYLAYISFQRSLNPLDHHIIQEIKHFRIDVQDECMWTRERSKAREKTKIGVTARVDAKIRQLRGRLQRKHSILSVMSGLSGVSASTDTTSTTQHS</sequence>
<evidence type="ECO:0000250" key="1"/>
<evidence type="ECO:0000250" key="2">
    <source>
        <dbReference type="UniProtKB" id="Q9SLK6"/>
    </source>
</evidence>
<evidence type="ECO:0000255" key="3"/>
<evidence type="ECO:0000269" key="4">
    <source>
    </source>
</evidence>
<evidence type="ECO:0000303" key="5">
    <source>
    </source>
</evidence>
<evidence type="ECO:0000305" key="6"/>
<evidence type="ECO:0000305" key="7">
    <source>
    </source>
</evidence>
<evidence type="ECO:0000305" key="8">
    <source>
    </source>
</evidence>
<evidence type="ECO:0000312" key="9">
    <source>
        <dbReference type="Araport" id="AT3G13900"/>
    </source>
</evidence>
<evidence type="ECO:0000312" key="10">
    <source>
        <dbReference type="EMBL" id="BAB02320.1"/>
    </source>
</evidence>
<keyword id="KW-0067">ATP-binding</keyword>
<keyword id="KW-1003">Cell membrane</keyword>
<keyword id="KW-1017">Isopeptide bond</keyword>
<keyword id="KW-0460">Magnesium</keyword>
<keyword id="KW-0472">Membrane</keyword>
<keyword id="KW-0479">Metal-binding</keyword>
<keyword id="KW-0547">Nucleotide-binding</keyword>
<keyword id="KW-1185">Reference proteome</keyword>
<keyword id="KW-1278">Translocase</keyword>
<keyword id="KW-0812">Transmembrane</keyword>
<keyword id="KW-1133">Transmembrane helix</keyword>
<keyword id="KW-0832">Ubl conjugation</keyword>
<feature type="chain" id="PRO_0000046391" description="Probable phospholipid-transporting ATPase 7">
    <location>
        <begin position="1"/>
        <end position="1243"/>
    </location>
</feature>
<feature type="topological domain" description="Cytoplasmic" evidence="3">
    <location>
        <begin position="1"/>
        <end position="74"/>
    </location>
</feature>
<feature type="transmembrane region" description="Helical" evidence="3">
    <location>
        <begin position="75"/>
        <end position="96"/>
    </location>
</feature>
<feature type="topological domain" description="Extracellular" evidence="3">
    <location>
        <begin position="97"/>
        <end position="100"/>
    </location>
</feature>
<feature type="transmembrane region" description="Helical" evidence="3">
    <location>
        <begin position="101"/>
        <end position="123"/>
    </location>
</feature>
<feature type="topological domain" description="Cytoplasmic" evidence="3">
    <location>
        <begin position="124"/>
        <end position="305"/>
    </location>
</feature>
<feature type="transmembrane region" description="Helical" evidence="3">
    <location>
        <begin position="306"/>
        <end position="327"/>
    </location>
</feature>
<feature type="topological domain" description="Extracellular" evidence="3">
    <location>
        <begin position="328"/>
        <end position="359"/>
    </location>
</feature>
<feature type="transmembrane region" description="Helical" evidence="3">
    <location>
        <begin position="360"/>
        <end position="377"/>
    </location>
</feature>
<feature type="topological domain" description="Cytoplasmic" evidence="3">
    <location>
        <begin position="378"/>
        <end position="941"/>
    </location>
</feature>
<feature type="transmembrane region" description="Helical" evidence="3">
    <location>
        <begin position="942"/>
        <end position="961"/>
    </location>
</feature>
<feature type="topological domain" description="Extracellular" evidence="3">
    <location>
        <begin position="962"/>
        <end position="975"/>
    </location>
</feature>
<feature type="transmembrane region" description="Helical" evidence="3">
    <location>
        <begin position="976"/>
        <end position="995"/>
    </location>
</feature>
<feature type="topological domain" description="Cytoplasmic" evidence="3">
    <location>
        <begin position="996"/>
        <end position="1025"/>
    </location>
</feature>
<feature type="transmembrane region" description="Helical" evidence="3">
    <location>
        <begin position="1026"/>
        <end position="1048"/>
    </location>
</feature>
<feature type="topological domain" description="Extracellular" evidence="3">
    <location>
        <begin position="1049"/>
        <end position="1061"/>
    </location>
</feature>
<feature type="transmembrane region" description="Helical" evidence="3">
    <location>
        <begin position="1062"/>
        <end position="1084"/>
    </location>
</feature>
<feature type="topological domain" description="Cytoplasmic" evidence="3">
    <location>
        <begin position="1085"/>
        <end position="1090"/>
    </location>
</feature>
<feature type="transmembrane region" description="Helical" evidence="3">
    <location>
        <begin position="1091"/>
        <end position="1111"/>
    </location>
</feature>
<feature type="topological domain" description="Extracellular" evidence="3">
    <location>
        <begin position="1112"/>
        <end position="1128"/>
    </location>
</feature>
<feature type="transmembrane region" description="Helical" evidence="3">
    <location>
        <begin position="1129"/>
        <end position="1153"/>
    </location>
</feature>
<feature type="topological domain" description="Cytoplasmic" evidence="3">
    <location>
        <begin position="1154"/>
        <end position="1243"/>
    </location>
</feature>
<feature type="active site" description="4-aspartylphosphate intermediate" evidence="1">
    <location>
        <position position="425"/>
    </location>
</feature>
<feature type="binding site" evidence="1">
    <location>
        <position position="886"/>
    </location>
    <ligand>
        <name>Mg(2+)</name>
        <dbReference type="ChEBI" id="CHEBI:18420"/>
    </ligand>
</feature>
<feature type="binding site" evidence="1">
    <location>
        <position position="890"/>
    </location>
    <ligand>
        <name>Mg(2+)</name>
        <dbReference type="ChEBI" id="CHEBI:18420"/>
    </ligand>
</feature>
<feature type="cross-link" description="Glycyl lysine isopeptide (Lys-Gly) (interchain with G-Cter in ubiquitin)" evidence="2">
    <location>
        <position position="623"/>
    </location>
</feature>
<feature type="sequence conflict" description="In Ref. 1; BAB02320." evidence="6" ref="1">
    <original>V</original>
    <variation>F</variation>
    <location>
        <position position="614"/>
    </location>
</feature>
<organism>
    <name type="scientific">Arabidopsis thaliana</name>
    <name type="common">Mouse-ear cress</name>
    <dbReference type="NCBI Taxonomy" id="3702"/>
    <lineage>
        <taxon>Eukaryota</taxon>
        <taxon>Viridiplantae</taxon>
        <taxon>Streptophyta</taxon>
        <taxon>Embryophyta</taxon>
        <taxon>Tracheophyta</taxon>
        <taxon>Spermatophyta</taxon>
        <taxon>Magnoliopsida</taxon>
        <taxon>eudicotyledons</taxon>
        <taxon>Gunneridae</taxon>
        <taxon>Pentapetalae</taxon>
        <taxon>rosids</taxon>
        <taxon>malvids</taxon>
        <taxon>Brassicales</taxon>
        <taxon>Brassicaceae</taxon>
        <taxon>Camelineae</taxon>
        <taxon>Arabidopsis</taxon>
    </lineage>
</organism>
<name>ALA7_ARATH</name>
<gene>
    <name evidence="5" type="primary">ALA7</name>
    <name evidence="9" type="ordered locus">At3g13900</name>
    <name evidence="10" type="ORF">MDC16.2</name>
</gene>
<reference key="1">
    <citation type="journal article" date="2000" name="DNA Res.">
        <title>Structural analysis of Arabidopsis thaliana chromosome 3. I. Sequence features of the regions of 4,504,864 bp covered by sixty P1 and TAC clones.</title>
        <authorList>
            <person name="Sato S."/>
            <person name="Nakamura Y."/>
            <person name="Kaneko T."/>
            <person name="Katoh T."/>
            <person name="Asamizu E."/>
            <person name="Tabata S."/>
        </authorList>
    </citation>
    <scope>NUCLEOTIDE SEQUENCE [LARGE SCALE GENOMIC DNA]</scope>
    <source>
        <strain>cv. Columbia</strain>
    </source>
</reference>
<reference key="2">
    <citation type="journal article" date="2017" name="Plant J.">
        <title>Araport11: a complete reannotation of the Arabidopsis thaliana reference genome.</title>
        <authorList>
            <person name="Cheng C.Y."/>
            <person name="Krishnakumar V."/>
            <person name="Chan A.P."/>
            <person name="Thibaud-Nissen F."/>
            <person name="Schobel S."/>
            <person name="Town C.D."/>
        </authorList>
    </citation>
    <scope>GENOME REANNOTATION</scope>
    <source>
        <strain>cv. Columbia</strain>
    </source>
</reference>
<reference key="3">
    <citation type="journal article" date="2001" name="Plant Physiol.">
        <title>Inventory of the superfamily of P-type ion pumps in Arabidopsis.</title>
        <authorList>
            <person name="Axelsen K.B."/>
            <person name="Palmgren M.G."/>
        </authorList>
    </citation>
    <scope>GENE FAMILY</scope>
    <scope>NOMENCLATURE</scope>
</reference>
<reference key="4">
    <citation type="journal article" date="2015" name="Front. Plant Sci.">
        <title>Loss of the Arabidopsis thaliana P4-ATPases ALA6 and ALA7 impairs pollen fitness and alters the pollen tube plasma membrane.</title>
        <authorList>
            <person name="McDowell S.C."/>
            <person name="Lopez-Marques R.L."/>
            <person name="Cohen T."/>
            <person name="Brown E."/>
            <person name="Rosenberg A."/>
            <person name="Palmgren M.G."/>
            <person name="Harper J.F."/>
        </authorList>
    </citation>
    <scope>DISRUPTION PHENOTYPE</scope>
</reference>